<keyword id="KW-1003">Cell membrane</keyword>
<keyword id="KW-0444">Lipid biosynthesis</keyword>
<keyword id="KW-0443">Lipid metabolism</keyword>
<keyword id="KW-0472">Membrane</keyword>
<keyword id="KW-0594">Phospholipid biosynthesis</keyword>
<keyword id="KW-1208">Phospholipid metabolism</keyword>
<keyword id="KW-1185">Reference proteome</keyword>
<keyword id="KW-0808">Transferase</keyword>
<keyword id="KW-0812">Transmembrane</keyword>
<keyword id="KW-1133">Transmembrane helix</keyword>
<proteinExistence type="inferred from homology"/>
<reference key="1">
    <citation type="journal article" date="1996" name="Nucleic Acids Res.">
        <title>Complete sequence analysis of the genome of the bacterium Mycoplasma pneumoniae.</title>
        <authorList>
            <person name="Himmelreich R."/>
            <person name="Hilbert H."/>
            <person name="Plagens H."/>
            <person name="Pirkl E."/>
            <person name="Li B.-C."/>
            <person name="Herrmann R."/>
        </authorList>
    </citation>
    <scope>NUCLEOTIDE SEQUENCE [LARGE SCALE GENOMIC DNA]</scope>
    <source>
        <strain>ATCC 29342 / M129 / Subtype 1</strain>
    </source>
</reference>
<accession>P75520</accession>
<evidence type="ECO:0000250" key="1"/>
<evidence type="ECO:0000255" key="2"/>
<evidence type="ECO:0000305" key="3"/>
<dbReference type="EC" id="2.7.8.5"/>
<dbReference type="EMBL" id="U00089">
    <property type="protein sequence ID" value="AAB96227.1"/>
    <property type="molecule type" value="Genomic_DNA"/>
</dbReference>
<dbReference type="PIR" id="S73905">
    <property type="entry name" value="S73905"/>
</dbReference>
<dbReference type="RefSeq" id="NP_109941.1">
    <property type="nucleotide sequence ID" value="NC_000912.1"/>
</dbReference>
<dbReference type="RefSeq" id="WP_010874610.1">
    <property type="nucleotide sequence ID" value="NZ_OU342337.1"/>
</dbReference>
<dbReference type="SMR" id="P75520"/>
<dbReference type="IntAct" id="P75520">
    <property type="interactions" value="1"/>
</dbReference>
<dbReference type="STRING" id="272634.MPN_253"/>
<dbReference type="EnsemblBacteria" id="AAB96227">
    <property type="protein sequence ID" value="AAB96227"/>
    <property type="gene ID" value="MPN_253"/>
</dbReference>
<dbReference type="KEGG" id="mpn:MPN_253"/>
<dbReference type="PATRIC" id="fig|272634.6.peg.272"/>
<dbReference type="HOGENOM" id="CLU_051314_2_3_14"/>
<dbReference type="OrthoDB" id="9796672at2"/>
<dbReference type="BioCyc" id="MPNE272634:G1GJ3-399-MONOMER"/>
<dbReference type="UniPathway" id="UPA00084">
    <property type="reaction ID" value="UER00503"/>
</dbReference>
<dbReference type="Proteomes" id="UP000000808">
    <property type="component" value="Chromosome"/>
</dbReference>
<dbReference type="GO" id="GO:0005886">
    <property type="term" value="C:plasma membrane"/>
    <property type="evidence" value="ECO:0007669"/>
    <property type="project" value="UniProtKB-SubCell"/>
</dbReference>
<dbReference type="GO" id="GO:0008444">
    <property type="term" value="F:CDP-diacylglycerol-glycerol-3-phosphate 3-phosphatidyltransferase activity"/>
    <property type="evidence" value="ECO:0007669"/>
    <property type="project" value="UniProtKB-EC"/>
</dbReference>
<dbReference type="GO" id="GO:0006655">
    <property type="term" value="P:phosphatidylglycerol biosynthetic process"/>
    <property type="evidence" value="ECO:0007669"/>
    <property type="project" value="UniProtKB-UniPathway"/>
</dbReference>
<dbReference type="Gene3D" id="1.20.120.1760">
    <property type="match status" value="1"/>
</dbReference>
<dbReference type="InterPro" id="IPR050324">
    <property type="entry name" value="CDP-alcohol_PTase-I"/>
</dbReference>
<dbReference type="InterPro" id="IPR000462">
    <property type="entry name" value="CDP-OH_P_trans"/>
</dbReference>
<dbReference type="InterPro" id="IPR043130">
    <property type="entry name" value="CDP-OH_PTrfase_TM_dom"/>
</dbReference>
<dbReference type="InterPro" id="IPR048254">
    <property type="entry name" value="CDP_ALCOHOL_P_TRANSF_CS"/>
</dbReference>
<dbReference type="InterPro" id="IPR004570">
    <property type="entry name" value="Phosphatidylglycerol_P_synth"/>
</dbReference>
<dbReference type="NCBIfam" id="TIGR00560">
    <property type="entry name" value="pgsA"/>
    <property type="match status" value="1"/>
</dbReference>
<dbReference type="PANTHER" id="PTHR14269:SF62">
    <property type="entry name" value="CDP-DIACYLGLYCEROL--GLYCEROL-3-PHOSPHATE 3-PHOSPHATIDYLTRANSFERASE 1, CHLOROPLASTIC"/>
    <property type="match status" value="1"/>
</dbReference>
<dbReference type="PANTHER" id="PTHR14269">
    <property type="entry name" value="CDP-DIACYLGLYCEROL--GLYCEROL-3-PHOSPHATE 3-PHOSPHATIDYLTRANSFERASE-RELATED"/>
    <property type="match status" value="1"/>
</dbReference>
<dbReference type="Pfam" id="PF01066">
    <property type="entry name" value="CDP-OH_P_transf"/>
    <property type="match status" value="1"/>
</dbReference>
<dbReference type="PIRSF" id="PIRSF000847">
    <property type="entry name" value="Phos_ph_gly_syn"/>
    <property type="match status" value="1"/>
</dbReference>
<dbReference type="PROSITE" id="PS00379">
    <property type="entry name" value="CDP_ALCOHOL_P_TRANSF"/>
    <property type="match status" value="1"/>
</dbReference>
<organism>
    <name type="scientific">Mycoplasma pneumoniae (strain ATCC 29342 / M129 / Subtype 1)</name>
    <name type="common">Mycoplasmoides pneumoniae</name>
    <dbReference type="NCBI Taxonomy" id="272634"/>
    <lineage>
        <taxon>Bacteria</taxon>
        <taxon>Bacillati</taxon>
        <taxon>Mycoplasmatota</taxon>
        <taxon>Mycoplasmoidales</taxon>
        <taxon>Mycoplasmoidaceae</taxon>
        <taxon>Mycoplasmoides</taxon>
    </lineage>
</organism>
<comment type="function">
    <text evidence="1">This protein catalyzes the committed step to the synthesis of the acidic phospholipids.</text>
</comment>
<comment type="catalytic activity">
    <reaction>
        <text>a CDP-1,2-diacyl-sn-glycerol + sn-glycerol 3-phosphate = a 1,2-diacyl-sn-glycero-3-phospho-(1'-sn-glycero-3'-phosphate) + CMP + H(+)</text>
        <dbReference type="Rhea" id="RHEA:12593"/>
        <dbReference type="ChEBI" id="CHEBI:15378"/>
        <dbReference type="ChEBI" id="CHEBI:57597"/>
        <dbReference type="ChEBI" id="CHEBI:58332"/>
        <dbReference type="ChEBI" id="CHEBI:60110"/>
        <dbReference type="ChEBI" id="CHEBI:60377"/>
        <dbReference type="EC" id="2.7.8.5"/>
    </reaction>
</comment>
<comment type="pathway">
    <text>Phospholipid metabolism; phosphatidylglycerol biosynthesis; phosphatidylglycerol from CDP-diacylglycerol: step 1/2.</text>
</comment>
<comment type="subcellular location">
    <subcellularLocation>
        <location evidence="1">Cell membrane</location>
        <topology evidence="1">Multi-pass membrane protein</topology>
    </subcellularLocation>
</comment>
<comment type="similarity">
    <text evidence="3">Belongs to the CDP-alcohol phosphatidyltransferase class-I family.</text>
</comment>
<protein>
    <recommendedName>
        <fullName>CDP-diacylglycerol--glycerol-3-phosphate 3-phosphatidyltransferase</fullName>
        <ecNumber>2.7.8.5</ecNumber>
    </recommendedName>
    <alternativeName>
        <fullName>Phosphatidylglycerophosphate synthase</fullName>
        <shortName>PGP synthase</shortName>
    </alternativeName>
</protein>
<name>PGSA_MYCPN</name>
<sequence length="227" mass="26050">MRSPFPVPMVPLTIKTWQKKLPNWLTIYRIFIAVPTIIFLGLNHLLGSVASFTVLGNVTIHLQVSLFIGGVLFITAVISDYLDGYWARKWRVVSNFGKLWDPLADKVIINGVLIALVAYGYFHFSFLIVIVLRDLVLDGLRFYAQEKQLIIPANQWGKWKTTWQMIAILMSCFVFSFSLKETNSANTKIFYWAIVHLPYYLATAFSLVSFGIYAQQIYKTIKVKVKL</sequence>
<feature type="chain" id="PRO_0000056778" description="CDP-diacylglycerol--glycerol-3-phosphate 3-phosphatidyltransferase">
    <location>
        <begin position="1"/>
        <end position="227"/>
    </location>
</feature>
<feature type="transmembrane region" description="Helical" evidence="2">
    <location>
        <begin position="30"/>
        <end position="50"/>
    </location>
</feature>
<feature type="transmembrane region" description="Helical" evidence="2">
    <location>
        <begin position="58"/>
        <end position="78"/>
    </location>
</feature>
<feature type="transmembrane region" description="Helical" evidence="2">
    <location>
        <begin position="112"/>
        <end position="132"/>
    </location>
</feature>
<feature type="transmembrane region" description="Helical" evidence="2">
    <location>
        <begin position="159"/>
        <end position="179"/>
    </location>
</feature>
<feature type="transmembrane region" description="Helical" evidence="2">
    <location>
        <begin position="192"/>
        <end position="212"/>
    </location>
</feature>
<gene>
    <name type="primary">pgsA</name>
    <name type="ordered locus">MPN_253</name>
    <name type="ORF">MP579</name>
</gene>